<organism>
    <name type="scientific">Platymeris rhadamanthus</name>
    <name type="common">Red spot assassin bug</name>
    <dbReference type="NCBI Taxonomy" id="1134088"/>
    <lineage>
        <taxon>Eukaryota</taxon>
        <taxon>Metazoa</taxon>
        <taxon>Ecdysozoa</taxon>
        <taxon>Arthropoda</taxon>
        <taxon>Hexapoda</taxon>
        <taxon>Insecta</taxon>
        <taxon>Pterygota</taxon>
        <taxon>Neoptera</taxon>
        <taxon>Paraneoptera</taxon>
        <taxon>Hemiptera</taxon>
        <taxon>Heteroptera</taxon>
        <taxon>Panheteroptera</taxon>
        <taxon>Cimicomorpha</taxon>
        <taxon>Reduviidae</taxon>
        <taxon>Platymeris</taxon>
    </lineage>
</organism>
<sequence>MKLLGLLLLVFTFMALAFADEKDCIARGQKCVGENKPCCKGTTCMYYANRCVGV</sequence>
<keyword id="KW-0108">Calcium channel impairing toxin</keyword>
<keyword id="KW-1015">Disulfide bond</keyword>
<keyword id="KW-0872">Ion channel impairing toxin</keyword>
<keyword id="KW-0960">Knottin</keyword>
<keyword id="KW-0528">Neurotoxin</keyword>
<keyword id="KW-0964">Secreted</keyword>
<keyword id="KW-0732">Signal</keyword>
<keyword id="KW-0800">Toxin</keyword>
<keyword id="KW-1218">Voltage-gated calcium channel impairing toxin</keyword>
<feature type="signal peptide" evidence="3">
    <location>
        <begin position="1"/>
        <end position="19"/>
    </location>
</feature>
<feature type="chain" id="PRO_5025350039" description="U-reduvitoxin-Pr1a" evidence="4">
    <location>
        <begin position="20"/>
        <end position="54"/>
    </location>
</feature>
<feature type="disulfide bond" evidence="1">
    <location>
        <begin position="24"/>
        <end position="39"/>
    </location>
</feature>
<feature type="disulfide bond" evidence="1">
    <location>
        <begin position="31"/>
        <end position="44"/>
    </location>
</feature>
<feature type="disulfide bond" evidence="1">
    <location>
        <begin position="38"/>
        <end position="51"/>
    </location>
</feature>
<reference key="1">
    <citation type="journal article" date="2019" name="Toxins">
        <title>Missiles of mass disruption: composition and glandular origin of venom used as a projectile defensive weapon by the assassin bug Platymeris rhadamanthus.</title>
        <authorList>
            <person name="Walker A.A."/>
            <person name="Robinson S.D."/>
            <person name="Undheim E.A.B."/>
            <person name="Jin J."/>
            <person name="Han X."/>
            <person name="Fry B.G."/>
            <person name="Vetter I."/>
            <person name="King G.F."/>
        </authorList>
    </citation>
    <scope>NUCLEOTIDE SEQUENCE [MRNA]</scope>
    <scope>MASS SPECTROMETRY</scope>
    <scope>SUBCELLULAR LOCATION</scope>
    <scope>TISSUE SPECIFICITY</scope>
    <source>
        <tissue>Venom</tissue>
        <tissue>Venom gland</tissue>
    </source>
</reference>
<accession>A0A6B9KZ83</accession>
<name>PLK1A_PLARH</name>
<dbReference type="EMBL" id="MN208345">
    <property type="protein sequence ID" value="QHB21534.1"/>
    <property type="molecule type" value="mRNA"/>
</dbReference>
<dbReference type="SMR" id="A0A6B9KZ83"/>
<dbReference type="GO" id="GO:0005576">
    <property type="term" value="C:extracellular region"/>
    <property type="evidence" value="ECO:0007669"/>
    <property type="project" value="UniProtKB-SubCell"/>
</dbReference>
<dbReference type="GO" id="GO:0019855">
    <property type="term" value="F:calcium channel inhibitor activity"/>
    <property type="evidence" value="ECO:0007669"/>
    <property type="project" value="InterPro"/>
</dbReference>
<dbReference type="GO" id="GO:0090729">
    <property type="term" value="F:toxin activity"/>
    <property type="evidence" value="ECO:0007669"/>
    <property type="project" value="UniProtKB-KW"/>
</dbReference>
<dbReference type="InterPro" id="IPR012325">
    <property type="entry name" value="Assassin_bug_toxin-like"/>
</dbReference>
<dbReference type="Pfam" id="PF08117">
    <property type="entry name" value="Toxin_30"/>
    <property type="match status" value="1"/>
</dbReference>
<dbReference type="SUPFAM" id="SSF57059">
    <property type="entry name" value="omega toxin-like"/>
    <property type="match status" value="1"/>
</dbReference>
<proteinExistence type="evidence at protein level"/>
<comment type="function">
    <text evidence="2">Binds reversibly and blocks P/Q-type voltage-gated calcium channels (Cav).</text>
</comment>
<comment type="subcellular location">
    <subcellularLocation>
        <location evidence="4">Secreted</location>
    </subcellularLocation>
</comment>
<comment type="tissue specificity">
    <text evidence="4">Expressed by the venom gland (posterior main gland) (at protein level).</text>
</comment>
<comment type="domain">
    <text evidence="6">The presence of a 'disulfide through disulfide knot' structurally defines this protein as a knottin.</text>
</comment>
<comment type="mass spectrometry">
    <text>Monoisotopic mass.</text>
</comment>
<comment type="similarity">
    <text evidence="6">Belongs to the venom Ptu1-like knottin family.</text>
</comment>
<evidence type="ECO:0000250" key="1">
    <source>
        <dbReference type="UniProtKB" id="P58606"/>
    </source>
</evidence>
<evidence type="ECO:0000250" key="2">
    <source>
        <dbReference type="UniProtKB" id="P58608"/>
    </source>
</evidence>
<evidence type="ECO:0000255" key="3"/>
<evidence type="ECO:0000269" key="4">
    <source>
    </source>
</evidence>
<evidence type="ECO:0000303" key="5">
    <source>
    </source>
</evidence>
<evidence type="ECO:0000305" key="6"/>
<protein>
    <recommendedName>
        <fullName evidence="5">U-reduvitoxin-Pr1a</fullName>
        <shortName evidence="5">U-RDTX-Pr1a</shortName>
    </recommendedName>
</protein>